<proteinExistence type="inferred from homology"/>
<organism>
    <name type="scientific">Pyrobaculum neutrophilum (strain DSM 2338 / JCM 9278 / NBRC 100436 / V24Sta)</name>
    <name type="common">Thermoproteus neutrophilus</name>
    <dbReference type="NCBI Taxonomy" id="444157"/>
    <lineage>
        <taxon>Archaea</taxon>
        <taxon>Thermoproteota</taxon>
        <taxon>Thermoprotei</taxon>
        <taxon>Thermoproteales</taxon>
        <taxon>Thermoproteaceae</taxon>
        <taxon>Pyrobaculum</taxon>
    </lineage>
</organism>
<comment type="function">
    <text evidence="1">Catalyzes the reversible phosphorylation of UMP to UDP.</text>
</comment>
<comment type="catalytic activity">
    <reaction evidence="1">
        <text>UMP + ATP = UDP + ADP</text>
        <dbReference type="Rhea" id="RHEA:24400"/>
        <dbReference type="ChEBI" id="CHEBI:30616"/>
        <dbReference type="ChEBI" id="CHEBI:57865"/>
        <dbReference type="ChEBI" id="CHEBI:58223"/>
        <dbReference type="ChEBI" id="CHEBI:456216"/>
        <dbReference type="EC" id="2.7.4.22"/>
    </reaction>
</comment>
<comment type="activity regulation">
    <text evidence="1">Inhibited by UTP.</text>
</comment>
<comment type="pathway">
    <text evidence="1">Pyrimidine metabolism; CTP biosynthesis via de novo pathway; UDP from UMP (UMPK route): step 1/1.</text>
</comment>
<comment type="subunit">
    <text evidence="1">Homohexamer.</text>
</comment>
<comment type="subcellular location">
    <subcellularLocation>
        <location evidence="1">Cytoplasm</location>
    </subcellularLocation>
</comment>
<comment type="similarity">
    <text evidence="1">Belongs to the UMP kinase family.</text>
</comment>
<protein>
    <recommendedName>
        <fullName evidence="1">Uridylate kinase</fullName>
        <shortName evidence="1">UK</shortName>
        <ecNumber evidence="1">2.7.4.22</ecNumber>
    </recommendedName>
    <alternativeName>
        <fullName evidence="1">Uridine monophosphate kinase</fullName>
        <shortName evidence="1">UMP kinase</shortName>
        <shortName evidence="1">UMPK</shortName>
    </alternativeName>
</protein>
<accession>B1Y9Y6</accession>
<keyword id="KW-0067">ATP-binding</keyword>
<keyword id="KW-0963">Cytoplasm</keyword>
<keyword id="KW-0418">Kinase</keyword>
<keyword id="KW-0547">Nucleotide-binding</keyword>
<keyword id="KW-0665">Pyrimidine biosynthesis</keyword>
<keyword id="KW-0808">Transferase</keyword>
<reference key="1">
    <citation type="submission" date="2008-03" db="EMBL/GenBank/DDBJ databases">
        <title>Complete sequence of Thermoproteus neutrophilus V24Sta.</title>
        <authorList>
            <consortium name="US DOE Joint Genome Institute"/>
            <person name="Copeland A."/>
            <person name="Lucas S."/>
            <person name="Lapidus A."/>
            <person name="Glavina del Rio T."/>
            <person name="Dalin E."/>
            <person name="Tice H."/>
            <person name="Bruce D."/>
            <person name="Goodwin L."/>
            <person name="Pitluck S."/>
            <person name="Sims D."/>
            <person name="Brettin T."/>
            <person name="Detter J.C."/>
            <person name="Han C."/>
            <person name="Kuske C.R."/>
            <person name="Schmutz J."/>
            <person name="Larimer F."/>
            <person name="Land M."/>
            <person name="Hauser L."/>
            <person name="Kyrpides N."/>
            <person name="Mikhailova N."/>
            <person name="Biddle J.F."/>
            <person name="Zhang Z."/>
            <person name="Fitz-Gibbon S.T."/>
            <person name="Lowe T.M."/>
            <person name="Saltikov C."/>
            <person name="House C.H."/>
            <person name="Richardson P."/>
        </authorList>
    </citation>
    <scope>NUCLEOTIDE SEQUENCE [LARGE SCALE GENOMIC DNA]</scope>
    <source>
        <strain>DSM 2338 / JCM 9278 / NBRC 100436 / V24Sta</strain>
    </source>
</reference>
<feature type="chain" id="PRO_1000139219" description="Uridylate kinase">
    <location>
        <begin position="1"/>
        <end position="217"/>
    </location>
</feature>
<feature type="binding site" evidence="1">
    <location>
        <begin position="6"/>
        <end position="10"/>
    </location>
    <ligand>
        <name>ATP</name>
        <dbReference type="ChEBI" id="CHEBI:30616"/>
    </ligand>
</feature>
<feature type="binding site" evidence="1">
    <location>
        <position position="38"/>
    </location>
    <ligand>
        <name>UMP</name>
        <dbReference type="ChEBI" id="CHEBI:57865"/>
    </ligand>
</feature>
<feature type="binding site" evidence="1">
    <location>
        <position position="39"/>
    </location>
    <ligand>
        <name>ATP</name>
        <dbReference type="ChEBI" id="CHEBI:30616"/>
    </ligand>
</feature>
<feature type="binding site" evidence="1">
    <location>
        <position position="43"/>
    </location>
    <ligand>
        <name>ATP</name>
        <dbReference type="ChEBI" id="CHEBI:30616"/>
    </ligand>
</feature>
<feature type="binding site" evidence="1">
    <location>
        <position position="60"/>
    </location>
    <ligand>
        <name>UMP</name>
        <dbReference type="ChEBI" id="CHEBI:57865"/>
    </ligand>
</feature>
<feature type="binding site" evidence="1">
    <location>
        <begin position="107"/>
        <end position="113"/>
    </location>
    <ligand>
        <name>UMP</name>
        <dbReference type="ChEBI" id="CHEBI:57865"/>
    </ligand>
</feature>
<feature type="binding site" evidence="1">
    <location>
        <position position="134"/>
    </location>
    <ligand>
        <name>ATP</name>
        <dbReference type="ChEBI" id="CHEBI:30616"/>
    </ligand>
</feature>
<feature type="binding site" evidence="1">
    <location>
        <position position="139"/>
    </location>
    <ligand>
        <name>ATP</name>
        <dbReference type="ChEBI" id="CHEBI:30616"/>
    </ligand>
</feature>
<feature type="binding site" evidence="1">
    <location>
        <position position="142"/>
    </location>
    <ligand>
        <name>ATP</name>
        <dbReference type="ChEBI" id="CHEBI:30616"/>
    </ligand>
</feature>
<evidence type="ECO:0000255" key="1">
    <source>
        <dbReference type="HAMAP-Rule" id="MF_01220"/>
    </source>
</evidence>
<dbReference type="EC" id="2.7.4.22" evidence="1"/>
<dbReference type="EMBL" id="CP001014">
    <property type="protein sequence ID" value="ACB40536.1"/>
    <property type="molecule type" value="Genomic_DNA"/>
</dbReference>
<dbReference type="RefSeq" id="WP_012350955.1">
    <property type="nucleotide sequence ID" value="NC_010525.1"/>
</dbReference>
<dbReference type="SMR" id="B1Y9Y6"/>
<dbReference type="STRING" id="444157.Tneu_1613"/>
<dbReference type="GeneID" id="6165112"/>
<dbReference type="KEGG" id="tne:Tneu_1613"/>
<dbReference type="eggNOG" id="arCOG00858">
    <property type="taxonomic scope" value="Archaea"/>
</dbReference>
<dbReference type="HOGENOM" id="CLU_079546_0_0_2"/>
<dbReference type="OrthoDB" id="372251at2157"/>
<dbReference type="UniPathway" id="UPA00159">
    <property type="reaction ID" value="UER00275"/>
</dbReference>
<dbReference type="Proteomes" id="UP000001694">
    <property type="component" value="Chromosome"/>
</dbReference>
<dbReference type="GO" id="GO:0005737">
    <property type="term" value="C:cytoplasm"/>
    <property type="evidence" value="ECO:0007669"/>
    <property type="project" value="UniProtKB-SubCell"/>
</dbReference>
<dbReference type="GO" id="GO:0005524">
    <property type="term" value="F:ATP binding"/>
    <property type="evidence" value="ECO:0007669"/>
    <property type="project" value="UniProtKB-KW"/>
</dbReference>
<dbReference type="GO" id="GO:0033862">
    <property type="term" value="F:UMP kinase activity"/>
    <property type="evidence" value="ECO:0007669"/>
    <property type="project" value="UniProtKB-EC"/>
</dbReference>
<dbReference type="GO" id="GO:0044210">
    <property type="term" value="P:'de novo' CTP biosynthetic process"/>
    <property type="evidence" value="ECO:0007669"/>
    <property type="project" value="UniProtKB-UniRule"/>
</dbReference>
<dbReference type="GO" id="GO:0006225">
    <property type="term" value="P:UDP biosynthetic process"/>
    <property type="evidence" value="ECO:0007669"/>
    <property type="project" value="TreeGrafter"/>
</dbReference>
<dbReference type="Gene3D" id="3.40.1160.10">
    <property type="entry name" value="Acetylglutamate kinase-like"/>
    <property type="match status" value="1"/>
</dbReference>
<dbReference type="HAMAP" id="MF_01220_A">
    <property type="entry name" value="PyrH_A"/>
    <property type="match status" value="1"/>
</dbReference>
<dbReference type="InterPro" id="IPR036393">
    <property type="entry name" value="AceGlu_kinase-like_sf"/>
</dbReference>
<dbReference type="InterPro" id="IPR001048">
    <property type="entry name" value="Asp/Glu/Uridylate_kinase"/>
</dbReference>
<dbReference type="InterPro" id="IPR011817">
    <property type="entry name" value="Uridylate_kinase"/>
</dbReference>
<dbReference type="InterPro" id="IPR011818">
    <property type="entry name" value="Uridylate_kinase_arch/spir"/>
</dbReference>
<dbReference type="NCBIfam" id="TIGR02076">
    <property type="entry name" value="pyrH_arch"/>
    <property type="match status" value="1"/>
</dbReference>
<dbReference type="PANTHER" id="PTHR42833">
    <property type="entry name" value="URIDYLATE KINASE"/>
    <property type="match status" value="1"/>
</dbReference>
<dbReference type="PANTHER" id="PTHR42833:SF4">
    <property type="entry name" value="URIDYLATE KINASE PUMPKIN, CHLOROPLASTIC"/>
    <property type="match status" value="1"/>
</dbReference>
<dbReference type="Pfam" id="PF00696">
    <property type="entry name" value="AA_kinase"/>
    <property type="match status" value="1"/>
</dbReference>
<dbReference type="PIRSF" id="PIRSF005650">
    <property type="entry name" value="Uridylate_kin"/>
    <property type="match status" value="1"/>
</dbReference>
<dbReference type="SUPFAM" id="SSF53633">
    <property type="entry name" value="Carbamate kinase-like"/>
    <property type="match status" value="1"/>
</dbReference>
<sequence length="217" mass="23607">MAVVVKLSGRIFEDEELVLKYAEAIKSYGVKIAVVTGGGELARRYISAAKRGGASNTFQDLIGIYASRLNALLLISLLGDAYPKVPTNIEEFLEAWRSHRVVVAGGFQPGQSTATVAALVAEAAGASVLLNAANIDAVYSDDPRKNPKAERLPHLKYDEFERIVRSSSLPGGYELMDVWSISILRRNCITVYIFDGRRPEHIGAILRGENPGTKITC</sequence>
<name>PYRH_PYRNV</name>
<gene>
    <name evidence="1" type="primary">pyrH</name>
    <name type="ordered locus">Tneu_1613</name>
</gene>